<feature type="chain" id="PRO_0000369811" description="Uncharacterized protein V3">
    <location>
        <begin position="1"/>
        <end position="245"/>
    </location>
</feature>
<protein>
    <recommendedName>
        <fullName>Uncharacterized protein V3</fullName>
    </recommendedName>
</protein>
<proteinExistence type="predicted"/>
<gene>
    <name type="ORF">ORF3</name>
</gene>
<organismHost>
    <name type="scientific">Acanthamoeba polyphaga</name>
    <name type="common">Amoeba</name>
    <dbReference type="NCBI Taxonomy" id="5757"/>
</organismHost>
<sequence>MLSFLNLNKDSKPFAKIAGGKFKGKKAYVNEESDKGKNELVVPEGKFVPYPNPMYREVIYIAGQSGSGKSTYAAQYIYHYKKLFPKNKVFVFSRLKMAEILVSLGCIEIPIDDELQDMDAIRDIKDALCLFDDIDTIKEKHLRNTVYDIQNDILETGRHNNIYIIVTSHLINGNDKKNTRTILNEAHKVTFFPKSGAYGITYFLKNYIGLPKKQIDNVLEIKSRWITINKGYPLFIFYENGAKTL</sequence>
<organism>
    <name type="scientific">Sputnik virophage</name>
    <dbReference type="NCBI Taxonomy" id="543939"/>
    <lineage>
        <taxon>Viruses</taxon>
        <taxon>Varidnaviria</taxon>
        <taxon>Bamfordvirae</taxon>
        <taxon>Preplasmiviricota</taxon>
        <taxon>Maveriviricetes</taxon>
        <taxon>Priklausovirales</taxon>
        <taxon>Lavidaviridae</taxon>
        <taxon>Sputnikvirus</taxon>
        <taxon>Mimivirus-dependent virus Sputnik</taxon>
    </lineage>
</organism>
<reference key="1">
    <citation type="journal article" date="2008" name="Nature">
        <title>The virophage as a unique parasite of the giant mimivirus.</title>
        <authorList>
            <person name="La Scola B."/>
            <person name="Desnues C."/>
            <person name="Pagnier I."/>
            <person name="Robert C."/>
            <person name="Barrassi L."/>
            <person name="Fournous G."/>
            <person name="Merchat M."/>
            <person name="Suzan-Monti M."/>
            <person name="Forterre P."/>
            <person name="Koonin E."/>
            <person name="Raoult D."/>
        </authorList>
    </citation>
    <scope>NUCLEOTIDE SEQUENCE [GENOMIC DNA]</scope>
</reference>
<name>V3_SPTNK</name>
<accession>B4YNE3</accession>
<dbReference type="EMBL" id="EU606015">
    <property type="protein sequence ID" value="ACF16987.1"/>
    <property type="molecule type" value="Genomic_DNA"/>
</dbReference>
<dbReference type="RefSeq" id="YP_002122364.1">
    <property type="nucleotide sequence ID" value="NC_011132.1"/>
</dbReference>
<dbReference type="KEGG" id="vg:6760349"/>
<dbReference type="OrthoDB" id="24025at10239"/>
<dbReference type="Proteomes" id="UP000001863">
    <property type="component" value="Segment"/>
</dbReference>
<dbReference type="Gene3D" id="3.40.50.300">
    <property type="entry name" value="P-loop containing nucleotide triphosphate hydrolases"/>
    <property type="match status" value="1"/>
</dbReference>
<dbReference type="InterPro" id="IPR027417">
    <property type="entry name" value="P-loop_NTPase"/>
</dbReference>
<dbReference type="SUPFAM" id="SSF52540">
    <property type="entry name" value="P-loop containing nucleoside triphosphate hydrolases"/>
    <property type="match status" value="1"/>
</dbReference>
<keyword id="KW-1185">Reference proteome</keyword>